<sequence>MLAKGSEPWLFTATFITALFAVLSRAMNSSHLNHVAYIAMAMTFFMVLFFRDPERKVEVSDTYMISPADGTVIDIRGRKICIFMFLQNVHVNRAPISGKIREITYKKGGYLPAFCKDSERNERNEFIIHSKYGDVSVMQIAGTIARRIVSYSRVNDNIEQGQRIGMIRLGSRVDVTIPHDFEIIVRKGERVLAGKTIIATIKK</sequence>
<name>ASD_METBF</name>
<gene>
    <name evidence="1" type="primary">asd</name>
    <name type="ordered locus">Mbar_A0875</name>
</gene>
<dbReference type="EC" id="4.1.1.-" evidence="1"/>
<dbReference type="EMBL" id="CP000099">
    <property type="protein sequence ID" value="AAZ69849.1"/>
    <property type="molecule type" value="Genomic_DNA"/>
</dbReference>
<dbReference type="SMR" id="Q46E43"/>
<dbReference type="STRING" id="269797.Mbar_A0875"/>
<dbReference type="PaxDb" id="269797-Mbar_A0875"/>
<dbReference type="KEGG" id="mba:Mbar_A0875"/>
<dbReference type="eggNOG" id="arCOG04470">
    <property type="taxonomic scope" value="Archaea"/>
</dbReference>
<dbReference type="HOGENOM" id="CLU_072492_1_0_2"/>
<dbReference type="OrthoDB" id="50255at2157"/>
<dbReference type="GO" id="GO:0005886">
    <property type="term" value="C:plasma membrane"/>
    <property type="evidence" value="ECO:0007669"/>
    <property type="project" value="UniProtKB-SubCell"/>
</dbReference>
<dbReference type="GO" id="GO:0004609">
    <property type="term" value="F:phosphatidylserine decarboxylase activity"/>
    <property type="evidence" value="ECO:0007669"/>
    <property type="project" value="InterPro"/>
</dbReference>
<dbReference type="GO" id="GO:0008654">
    <property type="term" value="P:phospholipid biosynthetic process"/>
    <property type="evidence" value="ECO:0007669"/>
    <property type="project" value="UniProtKB-UniRule"/>
</dbReference>
<dbReference type="HAMAP" id="MF_00664">
    <property type="entry name" value="PS_decarb_PSD_A"/>
    <property type="match status" value="1"/>
</dbReference>
<dbReference type="InterPro" id="IPR003817">
    <property type="entry name" value="PS_Dcarbxylase"/>
</dbReference>
<dbReference type="InterPro" id="IPR033175">
    <property type="entry name" value="PSD-A"/>
</dbReference>
<dbReference type="NCBIfam" id="NF003685">
    <property type="entry name" value="PRK05305.2-5"/>
    <property type="match status" value="1"/>
</dbReference>
<dbReference type="PANTHER" id="PTHR35809">
    <property type="entry name" value="ARCHAETIDYLSERINE DECARBOXYLASE PROENZYME-RELATED"/>
    <property type="match status" value="1"/>
</dbReference>
<dbReference type="PANTHER" id="PTHR35809:SF1">
    <property type="entry name" value="ARCHAETIDYLSERINE DECARBOXYLASE PROENZYME-RELATED"/>
    <property type="match status" value="1"/>
</dbReference>
<dbReference type="Pfam" id="PF02666">
    <property type="entry name" value="PS_Dcarbxylase"/>
    <property type="match status" value="1"/>
</dbReference>
<comment type="function">
    <text evidence="1">Catalyzes the formation of archaetidylethanolamine (PtdEtn) from archaetidylserine (PtdSer).</text>
</comment>
<comment type="catalytic activity">
    <reaction evidence="1">
        <text>archaetidylserine + H(+) = archaetidylethanolamine + CO2</text>
        <dbReference type="Rhea" id="RHEA:51488"/>
        <dbReference type="ChEBI" id="CHEBI:15378"/>
        <dbReference type="ChEBI" id="CHEBI:16526"/>
        <dbReference type="ChEBI" id="CHEBI:71517"/>
        <dbReference type="ChEBI" id="CHEBI:134176"/>
    </reaction>
</comment>
<comment type="cofactor">
    <cofactor evidence="1">
        <name>pyruvate</name>
        <dbReference type="ChEBI" id="CHEBI:15361"/>
    </cofactor>
    <text evidence="1">Binds 1 pyruvoyl group covalently per subunit.</text>
</comment>
<comment type="subunit">
    <text evidence="1">Heterodimer of a large membrane-associated beta subunit and a small pyruvoyl-containing alpha subunit.</text>
</comment>
<comment type="subcellular location">
    <subcellularLocation>
        <location evidence="1">Cell membrane</location>
        <topology evidence="1">Peripheral membrane protein</topology>
    </subcellularLocation>
</comment>
<comment type="PTM">
    <text evidence="1">Is synthesized initially as an inactive proenzyme. Formation of the active enzyme involves a self-maturation process in which the active site pyruvoyl group is generated from an internal serine residue via an autocatalytic post-translational modification. Two non-identical subunits are generated from the proenzyme in this reaction, and the pyruvate is formed at the N-terminus of the alpha chain, which is derived from the carboxyl end of the proenzyme. The post-translation cleavage follows an unusual pathway, termed non-hydrolytic serinolysis, in which the side chain hydroxyl group of the serine supplies its oxygen atom to form the C-terminus of the beta chain, while the remainder of the serine residue undergoes an oxidative deamination to produce ammonia and the pyruvoyl prosthetic group on the alpha chain.</text>
</comment>
<comment type="similarity">
    <text evidence="1">Belongs to the phosphatidylserine decarboxylase family. PSD-A subfamily.</text>
</comment>
<proteinExistence type="inferred from homology"/>
<feature type="chain" id="PRO_0000262285" description="Archaetidylserine decarboxylase beta chain" evidence="1">
    <location>
        <begin position="1"/>
        <end position="170"/>
    </location>
</feature>
<feature type="chain" id="PRO_0000262286" description="Archaetidylserine decarboxylase alpha chain" evidence="1">
    <location>
        <begin position="171"/>
        <end position="203"/>
    </location>
</feature>
<feature type="active site" description="Schiff-base intermediate with substrate; via pyruvic acid" evidence="1">
    <location>
        <position position="171"/>
    </location>
</feature>
<feature type="site" description="Cleavage (non-hydrolytic); by autocatalysis" evidence="1">
    <location>
        <begin position="170"/>
        <end position="171"/>
    </location>
</feature>
<feature type="modified residue" description="Pyruvic acid (Ser); by autocatalysis" evidence="1">
    <location>
        <position position="171"/>
    </location>
</feature>
<keyword id="KW-1003">Cell membrane</keyword>
<keyword id="KW-0210">Decarboxylase</keyword>
<keyword id="KW-0444">Lipid biosynthesis</keyword>
<keyword id="KW-0443">Lipid metabolism</keyword>
<keyword id="KW-0456">Lyase</keyword>
<keyword id="KW-0472">Membrane</keyword>
<keyword id="KW-0594">Phospholipid biosynthesis</keyword>
<keyword id="KW-1208">Phospholipid metabolism</keyword>
<keyword id="KW-0670">Pyruvate</keyword>
<keyword id="KW-0865">Zymogen</keyword>
<accession>Q46E43</accession>
<organism>
    <name type="scientific">Methanosarcina barkeri (strain Fusaro / DSM 804)</name>
    <dbReference type="NCBI Taxonomy" id="269797"/>
    <lineage>
        <taxon>Archaea</taxon>
        <taxon>Methanobacteriati</taxon>
        <taxon>Methanobacteriota</taxon>
        <taxon>Stenosarchaea group</taxon>
        <taxon>Methanomicrobia</taxon>
        <taxon>Methanosarcinales</taxon>
        <taxon>Methanosarcinaceae</taxon>
        <taxon>Methanosarcina</taxon>
    </lineage>
</organism>
<reference key="1">
    <citation type="journal article" date="2006" name="J. Bacteriol.">
        <title>The Methanosarcina barkeri genome: comparative analysis with Methanosarcina acetivorans and Methanosarcina mazei reveals extensive rearrangement within methanosarcinal genomes.</title>
        <authorList>
            <person name="Maeder D.L."/>
            <person name="Anderson I."/>
            <person name="Brettin T.S."/>
            <person name="Bruce D.C."/>
            <person name="Gilna P."/>
            <person name="Han C.S."/>
            <person name="Lapidus A."/>
            <person name="Metcalf W.W."/>
            <person name="Saunders E."/>
            <person name="Tapia R."/>
            <person name="Sowers K.R."/>
        </authorList>
    </citation>
    <scope>NUCLEOTIDE SEQUENCE [LARGE SCALE GENOMIC DNA]</scope>
    <source>
        <strain>Fusaro / DSM 804</strain>
    </source>
</reference>
<protein>
    <recommendedName>
        <fullName evidence="1">Putative archaetidylserine decarboxylase proenzyme</fullName>
        <ecNumber evidence="1">4.1.1.-</ecNumber>
    </recommendedName>
    <component>
        <recommendedName>
            <fullName evidence="1">Archaetidylserine decarboxylase alpha chain</fullName>
        </recommendedName>
    </component>
    <component>
        <recommendedName>
            <fullName evidence="1">Archaetidylserine decarboxylase beta chain</fullName>
        </recommendedName>
    </component>
</protein>
<evidence type="ECO:0000255" key="1">
    <source>
        <dbReference type="HAMAP-Rule" id="MF_00664"/>
    </source>
</evidence>